<comment type="function">
    <text evidence="1">Catalyzes the stereoinversion of LL-2,6-diaminopimelate (L,L-DAP) to meso-diaminopimelate (meso-DAP), a precursor of L-lysine and an essential component of the bacterial peptidoglycan.</text>
</comment>
<comment type="catalytic activity">
    <reaction evidence="1">
        <text>(2S,6S)-2,6-diaminopimelate = meso-2,6-diaminopimelate</text>
        <dbReference type="Rhea" id="RHEA:15393"/>
        <dbReference type="ChEBI" id="CHEBI:57609"/>
        <dbReference type="ChEBI" id="CHEBI:57791"/>
        <dbReference type="EC" id="5.1.1.7"/>
    </reaction>
</comment>
<comment type="pathway">
    <text evidence="1">Amino-acid biosynthesis; L-lysine biosynthesis via DAP pathway; DL-2,6-diaminopimelate from LL-2,6-diaminopimelate: step 1/1.</text>
</comment>
<comment type="subunit">
    <text evidence="1">Homodimer.</text>
</comment>
<comment type="subcellular location">
    <subcellularLocation>
        <location evidence="1">Cytoplasm</location>
    </subcellularLocation>
</comment>
<comment type="similarity">
    <text evidence="1">Belongs to the diaminopimelate epimerase family.</text>
</comment>
<accession>A9R8K5</accession>
<reference key="1">
    <citation type="journal article" date="2010" name="J. Bacteriol.">
        <title>Genome sequence of the deep-rooted Yersinia pestis strain Angola reveals new insights into the evolution and pangenome of the plague bacterium.</title>
        <authorList>
            <person name="Eppinger M."/>
            <person name="Worsham P.L."/>
            <person name="Nikolich M.P."/>
            <person name="Riley D.R."/>
            <person name="Sebastian Y."/>
            <person name="Mou S."/>
            <person name="Achtman M."/>
            <person name="Lindler L.E."/>
            <person name="Ravel J."/>
        </authorList>
    </citation>
    <scope>NUCLEOTIDE SEQUENCE [LARGE SCALE GENOMIC DNA]</scope>
    <source>
        <strain>Angola</strain>
    </source>
</reference>
<organism>
    <name type="scientific">Yersinia pestis bv. Antiqua (strain Angola)</name>
    <dbReference type="NCBI Taxonomy" id="349746"/>
    <lineage>
        <taxon>Bacteria</taxon>
        <taxon>Pseudomonadati</taxon>
        <taxon>Pseudomonadota</taxon>
        <taxon>Gammaproteobacteria</taxon>
        <taxon>Enterobacterales</taxon>
        <taxon>Yersiniaceae</taxon>
        <taxon>Yersinia</taxon>
    </lineage>
</organism>
<sequence length="274" mass="30252">MQFSKMHGLGNDFMVVDAVTQNVYFSPELIRRLADRHTGVGFDQMLVVEPPYDPELDFHYRIFNADGSEVSQCGNGARCFARFVRLKGLTNKREISVSTQTGRMILSVTEDEQVCVNMGEPDFEPQTVPFRAAKAEKTYILRAAEHTVLCGVVSMGNPHCVMQVDDVSVANVALLGPVLENHERFPERANIGFMQVVSRDHIRLRVYERGAGETQACGSGACAAVAVGVVQDLLNENVHVELPGGSLHIRWQGPGHPLYMTGPATHVYDGFIHL</sequence>
<keyword id="KW-0028">Amino-acid biosynthesis</keyword>
<keyword id="KW-0963">Cytoplasm</keyword>
<keyword id="KW-0413">Isomerase</keyword>
<keyword id="KW-0457">Lysine biosynthesis</keyword>
<evidence type="ECO:0000255" key="1">
    <source>
        <dbReference type="HAMAP-Rule" id="MF_00197"/>
    </source>
</evidence>
<protein>
    <recommendedName>
        <fullName evidence="1">Diaminopimelate epimerase</fullName>
        <shortName evidence="1">DAP epimerase</shortName>
        <ecNumber evidence="1">5.1.1.7</ecNumber>
    </recommendedName>
    <alternativeName>
        <fullName evidence="1">PLP-independent amino acid racemase</fullName>
    </alternativeName>
</protein>
<dbReference type="EC" id="5.1.1.7" evidence="1"/>
<dbReference type="EMBL" id="CP000901">
    <property type="protein sequence ID" value="ABX87783.1"/>
    <property type="molecule type" value="Genomic_DNA"/>
</dbReference>
<dbReference type="RefSeq" id="WP_002211471.1">
    <property type="nucleotide sequence ID" value="NZ_CP009935.1"/>
</dbReference>
<dbReference type="SMR" id="A9R8K5"/>
<dbReference type="GeneID" id="57974864"/>
<dbReference type="KEGG" id="ypg:YpAngola_A0541"/>
<dbReference type="PATRIC" id="fig|349746.12.peg.1487"/>
<dbReference type="UniPathway" id="UPA00034">
    <property type="reaction ID" value="UER00025"/>
</dbReference>
<dbReference type="GO" id="GO:0005829">
    <property type="term" value="C:cytosol"/>
    <property type="evidence" value="ECO:0007669"/>
    <property type="project" value="TreeGrafter"/>
</dbReference>
<dbReference type="GO" id="GO:0008837">
    <property type="term" value="F:diaminopimelate epimerase activity"/>
    <property type="evidence" value="ECO:0007669"/>
    <property type="project" value="UniProtKB-UniRule"/>
</dbReference>
<dbReference type="GO" id="GO:0009089">
    <property type="term" value="P:lysine biosynthetic process via diaminopimelate"/>
    <property type="evidence" value="ECO:0007669"/>
    <property type="project" value="UniProtKB-UniRule"/>
</dbReference>
<dbReference type="FunFam" id="3.10.310.10:FF:000001">
    <property type="entry name" value="Diaminopimelate epimerase"/>
    <property type="match status" value="1"/>
</dbReference>
<dbReference type="FunFam" id="3.10.310.10:FF:000002">
    <property type="entry name" value="Diaminopimelate epimerase"/>
    <property type="match status" value="1"/>
</dbReference>
<dbReference type="Gene3D" id="3.10.310.10">
    <property type="entry name" value="Diaminopimelate Epimerase, Chain A, domain 1"/>
    <property type="match status" value="2"/>
</dbReference>
<dbReference type="HAMAP" id="MF_00197">
    <property type="entry name" value="DAP_epimerase"/>
    <property type="match status" value="1"/>
</dbReference>
<dbReference type="InterPro" id="IPR018510">
    <property type="entry name" value="DAP_epimerase_AS"/>
</dbReference>
<dbReference type="InterPro" id="IPR001653">
    <property type="entry name" value="DAP_epimerase_DapF"/>
</dbReference>
<dbReference type="NCBIfam" id="TIGR00652">
    <property type="entry name" value="DapF"/>
    <property type="match status" value="1"/>
</dbReference>
<dbReference type="PANTHER" id="PTHR31689:SF0">
    <property type="entry name" value="DIAMINOPIMELATE EPIMERASE"/>
    <property type="match status" value="1"/>
</dbReference>
<dbReference type="PANTHER" id="PTHR31689">
    <property type="entry name" value="DIAMINOPIMELATE EPIMERASE, CHLOROPLASTIC"/>
    <property type="match status" value="1"/>
</dbReference>
<dbReference type="Pfam" id="PF01678">
    <property type="entry name" value="DAP_epimerase"/>
    <property type="match status" value="2"/>
</dbReference>
<dbReference type="SUPFAM" id="SSF54506">
    <property type="entry name" value="Diaminopimelate epimerase-like"/>
    <property type="match status" value="1"/>
</dbReference>
<dbReference type="PROSITE" id="PS01326">
    <property type="entry name" value="DAP_EPIMERASE"/>
    <property type="match status" value="1"/>
</dbReference>
<gene>
    <name evidence="1" type="primary">dapF</name>
    <name type="ordered locus">YpAngola_A0541</name>
</gene>
<proteinExistence type="inferred from homology"/>
<feature type="chain" id="PRO_1000099275" description="Diaminopimelate epimerase">
    <location>
        <begin position="1"/>
        <end position="274"/>
    </location>
</feature>
<feature type="active site" description="Proton donor" evidence="1">
    <location>
        <position position="73"/>
    </location>
</feature>
<feature type="active site" description="Proton acceptor" evidence="1">
    <location>
        <position position="217"/>
    </location>
</feature>
<feature type="binding site" evidence="1">
    <location>
        <position position="11"/>
    </location>
    <ligand>
        <name>substrate</name>
    </ligand>
</feature>
<feature type="binding site" evidence="1">
    <location>
        <position position="44"/>
    </location>
    <ligand>
        <name>substrate</name>
    </ligand>
</feature>
<feature type="binding site" evidence="1">
    <location>
        <position position="64"/>
    </location>
    <ligand>
        <name>substrate</name>
    </ligand>
</feature>
<feature type="binding site" evidence="1">
    <location>
        <begin position="74"/>
        <end position="75"/>
    </location>
    <ligand>
        <name>substrate</name>
    </ligand>
</feature>
<feature type="binding site" evidence="1">
    <location>
        <position position="157"/>
    </location>
    <ligand>
        <name>substrate</name>
    </ligand>
</feature>
<feature type="binding site" evidence="1">
    <location>
        <position position="190"/>
    </location>
    <ligand>
        <name>substrate</name>
    </ligand>
</feature>
<feature type="binding site" evidence="1">
    <location>
        <begin position="208"/>
        <end position="209"/>
    </location>
    <ligand>
        <name>substrate</name>
    </ligand>
</feature>
<feature type="binding site" evidence="1">
    <location>
        <begin position="218"/>
        <end position="219"/>
    </location>
    <ligand>
        <name>substrate</name>
    </ligand>
</feature>
<feature type="site" description="Could be important to modulate the pK values of the two catalytic cysteine residues" evidence="1">
    <location>
        <position position="159"/>
    </location>
</feature>
<feature type="site" description="Could be important to modulate the pK values of the two catalytic cysteine residues" evidence="1">
    <location>
        <position position="208"/>
    </location>
</feature>
<feature type="site" description="Important for dimerization" evidence="1">
    <location>
        <position position="268"/>
    </location>
</feature>
<name>DAPF_YERPG</name>